<comment type="function">
    <text evidence="1">Specifically methylates the N4 position of cytidine in position 1402 (C1402) of 16S rRNA.</text>
</comment>
<comment type="catalytic activity">
    <reaction evidence="1">
        <text>cytidine(1402) in 16S rRNA + S-adenosyl-L-methionine = N(4)-methylcytidine(1402) in 16S rRNA + S-adenosyl-L-homocysteine + H(+)</text>
        <dbReference type="Rhea" id="RHEA:42928"/>
        <dbReference type="Rhea" id="RHEA-COMP:10286"/>
        <dbReference type="Rhea" id="RHEA-COMP:10287"/>
        <dbReference type="ChEBI" id="CHEBI:15378"/>
        <dbReference type="ChEBI" id="CHEBI:57856"/>
        <dbReference type="ChEBI" id="CHEBI:59789"/>
        <dbReference type="ChEBI" id="CHEBI:74506"/>
        <dbReference type="ChEBI" id="CHEBI:82748"/>
        <dbReference type="EC" id="2.1.1.199"/>
    </reaction>
</comment>
<comment type="subcellular location">
    <subcellularLocation>
        <location evidence="1">Cytoplasm</location>
    </subcellularLocation>
</comment>
<comment type="similarity">
    <text evidence="1">Belongs to the methyltransferase superfamily. RsmH family.</text>
</comment>
<keyword id="KW-0963">Cytoplasm</keyword>
<keyword id="KW-0489">Methyltransferase</keyword>
<keyword id="KW-1185">Reference proteome</keyword>
<keyword id="KW-0698">rRNA processing</keyword>
<keyword id="KW-0949">S-adenosyl-L-methionine</keyword>
<keyword id="KW-0808">Transferase</keyword>
<evidence type="ECO:0000255" key="1">
    <source>
        <dbReference type="HAMAP-Rule" id="MF_01007"/>
    </source>
</evidence>
<organism>
    <name type="scientific">Cellvibrio japonicus (strain Ueda107)</name>
    <name type="common">Pseudomonas fluorescens subsp. cellulosa</name>
    <dbReference type="NCBI Taxonomy" id="498211"/>
    <lineage>
        <taxon>Bacteria</taxon>
        <taxon>Pseudomonadati</taxon>
        <taxon>Pseudomonadota</taxon>
        <taxon>Gammaproteobacteria</taxon>
        <taxon>Cellvibrionales</taxon>
        <taxon>Cellvibrionaceae</taxon>
        <taxon>Cellvibrio</taxon>
    </lineage>
</organism>
<accession>B3PCM8</accession>
<protein>
    <recommendedName>
        <fullName evidence="1">Ribosomal RNA small subunit methyltransferase H</fullName>
        <ecNumber evidence="1">2.1.1.199</ecNumber>
    </recommendedName>
    <alternativeName>
        <fullName evidence="1">16S rRNA m(4)C1402 methyltransferase</fullName>
    </alternativeName>
    <alternativeName>
        <fullName evidence="1">rRNA (cytosine-N(4)-)-methyltransferase RsmH</fullName>
    </alternativeName>
</protein>
<feature type="chain" id="PRO_0000386793" description="Ribosomal RNA small subunit methyltransferase H">
    <location>
        <begin position="1"/>
        <end position="309"/>
    </location>
</feature>
<feature type="binding site" evidence="1">
    <location>
        <begin position="34"/>
        <end position="36"/>
    </location>
    <ligand>
        <name>S-adenosyl-L-methionine</name>
        <dbReference type="ChEBI" id="CHEBI:59789"/>
    </ligand>
</feature>
<feature type="binding site" evidence="1">
    <location>
        <position position="54"/>
    </location>
    <ligand>
        <name>S-adenosyl-L-methionine</name>
        <dbReference type="ChEBI" id="CHEBI:59789"/>
    </ligand>
</feature>
<feature type="binding site" evidence="1">
    <location>
        <position position="80"/>
    </location>
    <ligand>
        <name>S-adenosyl-L-methionine</name>
        <dbReference type="ChEBI" id="CHEBI:59789"/>
    </ligand>
</feature>
<feature type="binding site" evidence="1">
    <location>
        <position position="102"/>
    </location>
    <ligand>
        <name>S-adenosyl-L-methionine</name>
        <dbReference type="ChEBI" id="CHEBI:59789"/>
    </ligand>
</feature>
<feature type="binding site" evidence="1">
    <location>
        <position position="109"/>
    </location>
    <ligand>
        <name>S-adenosyl-L-methionine</name>
        <dbReference type="ChEBI" id="CHEBI:59789"/>
    </ligand>
</feature>
<gene>
    <name evidence="1" type="primary">rsmH</name>
    <name type="synonym">mraW</name>
    <name type="ordered locus">CJA_2937</name>
</gene>
<sequence length="309" mass="34028">MNQLPHVTVLLGEAVEALVSNPEGTYIDGTFGRGGHSALILQHLASEGRLLAIDKDLAAIATAREKFATDARFAIAHDSFASLKNLAAERGLVGRVQGILLDLGVSSPQLDEAERGFSFMQDGPLDMRMDQTRGPSAAEWVNTASEDEIAWVLREYGEERFAKRMARAIIAERQKRPFVRTGHLAEVIKAANPAWEKGKHPATRAFQAIRIQVNRELEDLEAVLAQAVDVLAPGGRLVVISFHSLEDRLVKRFIRQQEQGDPVPKGLPLREAQLNKTMRSLGKAMKASDQEVEANVRSRSAVMRVAEKL</sequence>
<reference key="1">
    <citation type="journal article" date="2008" name="J. Bacteriol.">
        <title>Insights into plant cell wall degradation from the genome sequence of the soil bacterium Cellvibrio japonicus.</title>
        <authorList>
            <person name="DeBoy R.T."/>
            <person name="Mongodin E.F."/>
            <person name="Fouts D.E."/>
            <person name="Tailford L.E."/>
            <person name="Khouri H."/>
            <person name="Emerson J.B."/>
            <person name="Mohamoud Y."/>
            <person name="Watkins K."/>
            <person name="Henrissat B."/>
            <person name="Gilbert H.J."/>
            <person name="Nelson K.E."/>
        </authorList>
    </citation>
    <scope>NUCLEOTIDE SEQUENCE [LARGE SCALE GENOMIC DNA]</scope>
    <source>
        <strain>Ueda107</strain>
    </source>
</reference>
<proteinExistence type="inferred from homology"/>
<dbReference type="EC" id="2.1.1.199" evidence="1"/>
<dbReference type="EMBL" id="CP000934">
    <property type="protein sequence ID" value="ACE85620.1"/>
    <property type="molecule type" value="Genomic_DNA"/>
</dbReference>
<dbReference type="RefSeq" id="WP_012488521.1">
    <property type="nucleotide sequence ID" value="NC_010995.1"/>
</dbReference>
<dbReference type="SMR" id="B3PCM8"/>
<dbReference type="STRING" id="498211.CJA_2937"/>
<dbReference type="KEGG" id="cja:CJA_2937"/>
<dbReference type="eggNOG" id="COG0275">
    <property type="taxonomic scope" value="Bacteria"/>
</dbReference>
<dbReference type="HOGENOM" id="CLU_038422_2_0_6"/>
<dbReference type="OrthoDB" id="9806637at2"/>
<dbReference type="Proteomes" id="UP000001036">
    <property type="component" value="Chromosome"/>
</dbReference>
<dbReference type="GO" id="GO:0005737">
    <property type="term" value="C:cytoplasm"/>
    <property type="evidence" value="ECO:0007669"/>
    <property type="project" value="UniProtKB-SubCell"/>
</dbReference>
<dbReference type="GO" id="GO:0071424">
    <property type="term" value="F:rRNA (cytosine-N4-)-methyltransferase activity"/>
    <property type="evidence" value="ECO:0007669"/>
    <property type="project" value="UniProtKB-UniRule"/>
</dbReference>
<dbReference type="GO" id="GO:0070475">
    <property type="term" value="P:rRNA base methylation"/>
    <property type="evidence" value="ECO:0007669"/>
    <property type="project" value="UniProtKB-UniRule"/>
</dbReference>
<dbReference type="FunFam" id="1.10.150.170:FF:000001">
    <property type="entry name" value="Ribosomal RNA small subunit methyltransferase H"/>
    <property type="match status" value="1"/>
</dbReference>
<dbReference type="Gene3D" id="1.10.150.170">
    <property type="entry name" value="Putative methyltransferase TM0872, insert domain"/>
    <property type="match status" value="1"/>
</dbReference>
<dbReference type="Gene3D" id="3.40.50.150">
    <property type="entry name" value="Vaccinia Virus protein VP39"/>
    <property type="match status" value="1"/>
</dbReference>
<dbReference type="HAMAP" id="MF_01007">
    <property type="entry name" value="16SrRNA_methyltr_H"/>
    <property type="match status" value="1"/>
</dbReference>
<dbReference type="InterPro" id="IPR002903">
    <property type="entry name" value="RsmH"/>
</dbReference>
<dbReference type="InterPro" id="IPR023397">
    <property type="entry name" value="SAM-dep_MeTrfase_MraW_recog"/>
</dbReference>
<dbReference type="InterPro" id="IPR029063">
    <property type="entry name" value="SAM-dependent_MTases_sf"/>
</dbReference>
<dbReference type="NCBIfam" id="TIGR00006">
    <property type="entry name" value="16S rRNA (cytosine(1402)-N(4))-methyltransferase RsmH"/>
    <property type="match status" value="1"/>
</dbReference>
<dbReference type="PANTHER" id="PTHR11265:SF0">
    <property type="entry name" value="12S RRNA N4-METHYLCYTIDINE METHYLTRANSFERASE"/>
    <property type="match status" value="1"/>
</dbReference>
<dbReference type="PANTHER" id="PTHR11265">
    <property type="entry name" value="S-ADENOSYL-METHYLTRANSFERASE MRAW"/>
    <property type="match status" value="1"/>
</dbReference>
<dbReference type="Pfam" id="PF01795">
    <property type="entry name" value="Methyltransf_5"/>
    <property type="match status" value="1"/>
</dbReference>
<dbReference type="PIRSF" id="PIRSF004486">
    <property type="entry name" value="MraW"/>
    <property type="match status" value="1"/>
</dbReference>
<dbReference type="SUPFAM" id="SSF81799">
    <property type="entry name" value="Putative methyltransferase TM0872, insert domain"/>
    <property type="match status" value="1"/>
</dbReference>
<dbReference type="SUPFAM" id="SSF53335">
    <property type="entry name" value="S-adenosyl-L-methionine-dependent methyltransferases"/>
    <property type="match status" value="1"/>
</dbReference>
<name>RSMH_CELJU</name>